<organism>
    <name type="scientific">Nitrobacter winogradskyi (strain ATCC 25391 / DSM 10237 / CIP 104748 / NCIMB 11846 / Nb-255)</name>
    <dbReference type="NCBI Taxonomy" id="323098"/>
    <lineage>
        <taxon>Bacteria</taxon>
        <taxon>Pseudomonadati</taxon>
        <taxon>Pseudomonadota</taxon>
        <taxon>Alphaproteobacteria</taxon>
        <taxon>Hyphomicrobiales</taxon>
        <taxon>Nitrobacteraceae</taxon>
        <taxon>Nitrobacter</taxon>
    </lineage>
</organism>
<feature type="chain" id="PRO_1000020902" description="Protease HtpX homolog">
    <location>
        <begin position="1"/>
        <end position="307"/>
    </location>
</feature>
<feature type="transmembrane region" description="Helical" evidence="1">
    <location>
        <begin position="7"/>
        <end position="27"/>
    </location>
</feature>
<feature type="transmembrane region" description="Helical" evidence="1">
    <location>
        <begin position="28"/>
        <end position="48"/>
    </location>
</feature>
<feature type="transmembrane region" description="Helical" evidence="1">
    <location>
        <begin position="145"/>
        <end position="165"/>
    </location>
</feature>
<feature type="transmembrane region" description="Helical" evidence="1">
    <location>
        <begin position="171"/>
        <end position="191"/>
    </location>
</feature>
<feature type="region of interest" description="Disordered" evidence="2">
    <location>
        <begin position="277"/>
        <end position="307"/>
    </location>
</feature>
<feature type="active site" evidence="1">
    <location>
        <position position="131"/>
    </location>
</feature>
<feature type="binding site" evidence="1">
    <location>
        <position position="130"/>
    </location>
    <ligand>
        <name>Zn(2+)</name>
        <dbReference type="ChEBI" id="CHEBI:29105"/>
        <note>catalytic</note>
    </ligand>
</feature>
<feature type="binding site" evidence="1">
    <location>
        <position position="134"/>
    </location>
    <ligand>
        <name>Zn(2+)</name>
        <dbReference type="ChEBI" id="CHEBI:29105"/>
        <note>catalytic</note>
    </ligand>
</feature>
<feature type="binding site" evidence="1">
    <location>
        <position position="200"/>
    </location>
    <ligand>
        <name>Zn(2+)</name>
        <dbReference type="ChEBI" id="CHEBI:29105"/>
        <note>catalytic</note>
    </ligand>
</feature>
<gene>
    <name evidence="1" type="primary">htpX</name>
    <name type="ordered locus">Nwi_0189</name>
</gene>
<keyword id="KW-0997">Cell inner membrane</keyword>
<keyword id="KW-1003">Cell membrane</keyword>
<keyword id="KW-0378">Hydrolase</keyword>
<keyword id="KW-0472">Membrane</keyword>
<keyword id="KW-0479">Metal-binding</keyword>
<keyword id="KW-0482">Metalloprotease</keyword>
<keyword id="KW-0645">Protease</keyword>
<keyword id="KW-1185">Reference proteome</keyword>
<keyword id="KW-0812">Transmembrane</keyword>
<keyword id="KW-1133">Transmembrane helix</keyword>
<keyword id="KW-0862">Zinc</keyword>
<dbReference type="EC" id="3.4.24.-" evidence="1"/>
<dbReference type="EMBL" id="CP000115">
    <property type="protein sequence ID" value="ABA03457.1"/>
    <property type="molecule type" value="Genomic_DNA"/>
</dbReference>
<dbReference type="RefSeq" id="WP_011313525.1">
    <property type="nucleotide sequence ID" value="NC_007406.1"/>
</dbReference>
<dbReference type="STRING" id="323098.Nwi_0189"/>
<dbReference type="KEGG" id="nwi:Nwi_0189"/>
<dbReference type="eggNOG" id="COG0501">
    <property type="taxonomic scope" value="Bacteria"/>
</dbReference>
<dbReference type="HOGENOM" id="CLU_042266_3_0_5"/>
<dbReference type="OrthoDB" id="15218at2"/>
<dbReference type="Proteomes" id="UP000002531">
    <property type="component" value="Chromosome"/>
</dbReference>
<dbReference type="GO" id="GO:0005886">
    <property type="term" value="C:plasma membrane"/>
    <property type="evidence" value="ECO:0007669"/>
    <property type="project" value="UniProtKB-SubCell"/>
</dbReference>
<dbReference type="GO" id="GO:0004222">
    <property type="term" value="F:metalloendopeptidase activity"/>
    <property type="evidence" value="ECO:0007669"/>
    <property type="project" value="UniProtKB-UniRule"/>
</dbReference>
<dbReference type="GO" id="GO:0008270">
    <property type="term" value="F:zinc ion binding"/>
    <property type="evidence" value="ECO:0007669"/>
    <property type="project" value="UniProtKB-UniRule"/>
</dbReference>
<dbReference type="GO" id="GO:0006508">
    <property type="term" value="P:proteolysis"/>
    <property type="evidence" value="ECO:0007669"/>
    <property type="project" value="UniProtKB-KW"/>
</dbReference>
<dbReference type="CDD" id="cd07336">
    <property type="entry name" value="M48B_HtpX_like"/>
    <property type="match status" value="1"/>
</dbReference>
<dbReference type="Gene3D" id="3.30.2010.10">
    <property type="entry name" value="Metalloproteases ('zincins'), catalytic domain"/>
    <property type="match status" value="1"/>
</dbReference>
<dbReference type="HAMAP" id="MF_00188">
    <property type="entry name" value="Pept_M48_protease_HtpX"/>
    <property type="match status" value="1"/>
</dbReference>
<dbReference type="InterPro" id="IPR050083">
    <property type="entry name" value="HtpX_protease"/>
</dbReference>
<dbReference type="InterPro" id="IPR022919">
    <property type="entry name" value="Pept_M48_protease_HtpX"/>
</dbReference>
<dbReference type="InterPro" id="IPR001915">
    <property type="entry name" value="Peptidase_M48"/>
</dbReference>
<dbReference type="NCBIfam" id="NF002363">
    <property type="entry name" value="PRK01345.1"/>
    <property type="match status" value="1"/>
</dbReference>
<dbReference type="NCBIfam" id="NF002826">
    <property type="entry name" value="PRK03001.1"/>
    <property type="match status" value="1"/>
</dbReference>
<dbReference type="PANTHER" id="PTHR43221">
    <property type="entry name" value="PROTEASE HTPX"/>
    <property type="match status" value="1"/>
</dbReference>
<dbReference type="PANTHER" id="PTHR43221:SF1">
    <property type="entry name" value="PROTEASE HTPX"/>
    <property type="match status" value="1"/>
</dbReference>
<dbReference type="Pfam" id="PF01435">
    <property type="entry name" value="Peptidase_M48"/>
    <property type="match status" value="1"/>
</dbReference>
<name>HTPX_NITWN</name>
<comment type="cofactor">
    <cofactor evidence="1">
        <name>Zn(2+)</name>
        <dbReference type="ChEBI" id="CHEBI:29105"/>
    </cofactor>
    <text evidence="1">Binds 1 zinc ion per subunit.</text>
</comment>
<comment type="subcellular location">
    <subcellularLocation>
        <location evidence="1">Cell inner membrane</location>
        <topology evidence="1">Multi-pass membrane protein</topology>
    </subcellularLocation>
</comment>
<comment type="similarity">
    <text evidence="1">Belongs to the peptidase M48B family.</text>
</comment>
<accession>Q3SW84</accession>
<sequence length="307" mass="32379">MNYFRTAILLAGLTGLFMGVGYLIGGASGATIALVVAAATNLFAYWNSDRMVLSMYGAHEVDPGTAPDLHRLVAELASRAGLPMPRVFVMDNPQPNAFATGRNPENAAVAVTTGLMQSLSREELAGVIAHELAHIKHHDTLLMTITATIAGAISMLAQFGMFFGGNRDNHGPGIIGSLAMMILAPFGAMLVQMAISRTREYAADEMGARICGQPMWLASALARIENAAHQVPNMEAERAPATAHMFIINPLSGRGMDNLFATHPSTENRIAALQRLAGQSGGGLAPGGPPPDPSSPWNKGSRRGPWG</sequence>
<reference key="1">
    <citation type="journal article" date="2006" name="Appl. Environ. Microbiol.">
        <title>Genome sequence of the chemolithoautotrophic nitrite-oxidizing bacterium Nitrobacter winogradskyi Nb-255.</title>
        <authorList>
            <person name="Starkenburg S.R."/>
            <person name="Chain P.S.G."/>
            <person name="Sayavedra-Soto L.A."/>
            <person name="Hauser L."/>
            <person name="Land M.L."/>
            <person name="Larimer F.W."/>
            <person name="Malfatti S.A."/>
            <person name="Klotz M.G."/>
            <person name="Bottomley P.J."/>
            <person name="Arp D.J."/>
            <person name="Hickey W.J."/>
        </authorList>
    </citation>
    <scope>NUCLEOTIDE SEQUENCE [LARGE SCALE GENOMIC DNA]</scope>
    <source>
        <strain>ATCC 25391 / DSM 10237 / CIP 104748 / NCIMB 11846 / Nb-255</strain>
    </source>
</reference>
<proteinExistence type="inferred from homology"/>
<protein>
    <recommendedName>
        <fullName evidence="1">Protease HtpX homolog</fullName>
        <ecNumber evidence="1">3.4.24.-</ecNumber>
    </recommendedName>
</protein>
<evidence type="ECO:0000255" key="1">
    <source>
        <dbReference type="HAMAP-Rule" id="MF_00188"/>
    </source>
</evidence>
<evidence type="ECO:0000256" key="2">
    <source>
        <dbReference type="SAM" id="MobiDB-lite"/>
    </source>
</evidence>